<proteinExistence type="inferred from homology"/>
<feature type="chain" id="PRO_1000123924" description="Probable protein kinase UbiB">
    <location>
        <begin position="1"/>
        <end position="549"/>
    </location>
</feature>
<feature type="transmembrane region" description="Helical" evidence="1">
    <location>
        <begin position="498"/>
        <end position="517"/>
    </location>
</feature>
<feature type="transmembrane region" description="Helical" evidence="1">
    <location>
        <begin position="521"/>
        <end position="540"/>
    </location>
</feature>
<feature type="domain" description="Protein kinase" evidence="1">
    <location>
        <begin position="123"/>
        <end position="501"/>
    </location>
</feature>
<feature type="active site" description="Proton acceptor" evidence="1">
    <location>
        <position position="287"/>
    </location>
</feature>
<feature type="binding site" evidence="1">
    <location>
        <begin position="129"/>
        <end position="137"/>
    </location>
    <ligand>
        <name>ATP</name>
        <dbReference type="ChEBI" id="CHEBI:30616"/>
    </ligand>
</feature>
<feature type="binding site" evidence="1">
    <location>
        <position position="152"/>
    </location>
    <ligand>
        <name>ATP</name>
        <dbReference type="ChEBI" id="CHEBI:30616"/>
    </ligand>
</feature>
<sequence length="549" mass="62704">MSISSLHRGYQVLRTLLHYGLDELLAKDKRPKLFPLIRGCFFWIRNQHKDKSAAERLKLAMQELGPVYIKLGQMLSTRRDLLDDEWAYQLAMLQDRVPPFDSALAREAIETELNASIDSLFDDFDDVPLASASIAQVHSATLKSNGKAVVLKVLRPNVEALILADLQLMSHCAALLERILGDGNRLRPAEVIEDYRLTILGELNLKLEALNAIKLRNNFLDSDALYVPYIYEDLSFTRLIVMERIYGIAVSDLSALKAQGTNLKLLAERGVELFFTQVFRDNFFHADMHPGNIFISRDHPDNPYYIGLDCGIMGTLTDVDKRYLAENFLAFFNRDYQRIAQLHLESGWVSEHTDIVAFEQAIKIVCEPMFNKPLAEISFGHVLLALFRTARQFNMVVQPQLVLLQKTLLYIEGLGRQLYPQLDLWQTAKPFLEQWMAKQVGPKALFDKFKSNAPFWAEKLPELPELVYDNLKLGRKLLGTQQQMLDKYLKYQHKAHKSNYLLITSAVFVICGTILFTQAVTLWASLLCLGTGAGLWLLGWQARPKNRKL</sequence>
<protein>
    <recommendedName>
        <fullName evidence="1">Probable protein kinase UbiB</fullName>
        <ecNumber evidence="1">2.7.-.-</ecNumber>
    </recommendedName>
    <alternativeName>
        <fullName evidence="1">Ubiquinone biosynthesis protein UbiB</fullName>
    </alternativeName>
</protein>
<gene>
    <name evidence="1" type="primary">ubiB</name>
    <name type="ordered locus">Sden_0459</name>
</gene>
<comment type="function">
    <text evidence="1">Is probably a protein kinase regulator of UbiI activity which is involved in aerobic coenzyme Q (ubiquinone) biosynthesis.</text>
</comment>
<comment type="pathway">
    <text>Cofactor biosynthesis; ubiquinone biosynthesis [regulation].</text>
</comment>
<comment type="subcellular location">
    <subcellularLocation>
        <location evidence="1">Cell inner membrane</location>
        <topology evidence="1">Multi-pass membrane protein</topology>
    </subcellularLocation>
</comment>
<comment type="similarity">
    <text evidence="1">Belongs to the ABC1 family. UbiB subfamily.</text>
</comment>
<organism>
    <name type="scientific">Shewanella denitrificans (strain OS217 / ATCC BAA-1090 / DSM 15013)</name>
    <dbReference type="NCBI Taxonomy" id="318161"/>
    <lineage>
        <taxon>Bacteria</taxon>
        <taxon>Pseudomonadati</taxon>
        <taxon>Pseudomonadota</taxon>
        <taxon>Gammaproteobacteria</taxon>
        <taxon>Alteromonadales</taxon>
        <taxon>Shewanellaceae</taxon>
        <taxon>Shewanella</taxon>
    </lineage>
</organism>
<accession>Q12S25</accession>
<reference key="1">
    <citation type="submission" date="2006-03" db="EMBL/GenBank/DDBJ databases">
        <title>Complete sequence of Shewanella denitrificans OS217.</title>
        <authorList>
            <consortium name="US DOE Joint Genome Institute"/>
            <person name="Copeland A."/>
            <person name="Lucas S."/>
            <person name="Lapidus A."/>
            <person name="Barry K."/>
            <person name="Detter J.C."/>
            <person name="Glavina del Rio T."/>
            <person name="Hammon N."/>
            <person name="Israni S."/>
            <person name="Dalin E."/>
            <person name="Tice H."/>
            <person name="Pitluck S."/>
            <person name="Brettin T."/>
            <person name="Bruce D."/>
            <person name="Han C."/>
            <person name="Tapia R."/>
            <person name="Gilna P."/>
            <person name="Kiss H."/>
            <person name="Schmutz J."/>
            <person name="Larimer F."/>
            <person name="Land M."/>
            <person name="Hauser L."/>
            <person name="Kyrpides N."/>
            <person name="Lykidis A."/>
            <person name="Richardson P."/>
        </authorList>
    </citation>
    <scope>NUCLEOTIDE SEQUENCE [LARGE SCALE GENOMIC DNA]</scope>
    <source>
        <strain>OS217 / ATCC BAA-1090 / DSM 15013</strain>
    </source>
</reference>
<evidence type="ECO:0000255" key="1">
    <source>
        <dbReference type="HAMAP-Rule" id="MF_00414"/>
    </source>
</evidence>
<dbReference type="EC" id="2.7.-.-" evidence="1"/>
<dbReference type="EMBL" id="CP000302">
    <property type="protein sequence ID" value="ABE53751.1"/>
    <property type="molecule type" value="Genomic_DNA"/>
</dbReference>
<dbReference type="RefSeq" id="WP_011494917.1">
    <property type="nucleotide sequence ID" value="NC_007954.1"/>
</dbReference>
<dbReference type="SMR" id="Q12S25"/>
<dbReference type="STRING" id="318161.Sden_0459"/>
<dbReference type="KEGG" id="sdn:Sden_0459"/>
<dbReference type="eggNOG" id="COG0661">
    <property type="taxonomic scope" value="Bacteria"/>
</dbReference>
<dbReference type="HOGENOM" id="CLU_006533_0_0_6"/>
<dbReference type="OrthoDB" id="9795390at2"/>
<dbReference type="UniPathway" id="UPA00232"/>
<dbReference type="Proteomes" id="UP000001982">
    <property type="component" value="Chromosome"/>
</dbReference>
<dbReference type="GO" id="GO:0005886">
    <property type="term" value="C:plasma membrane"/>
    <property type="evidence" value="ECO:0007669"/>
    <property type="project" value="UniProtKB-SubCell"/>
</dbReference>
<dbReference type="GO" id="GO:0005524">
    <property type="term" value="F:ATP binding"/>
    <property type="evidence" value="ECO:0007669"/>
    <property type="project" value="UniProtKB-KW"/>
</dbReference>
<dbReference type="GO" id="GO:0004672">
    <property type="term" value="F:protein kinase activity"/>
    <property type="evidence" value="ECO:0007669"/>
    <property type="project" value="UniProtKB-UniRule"/>
</dbReference>
<dbReference type="GO" id="GO:0010795">
    <property type="term" value="P:regulation of ubiquinone biosynthetic process"/>
    <property type="evidence" value="ECO:0007669"/>
    <property type="project" value="UniProtKB-UniRule"/>
</dbReference>
<dbReference type="GO" id="GO:0006744">
    <property type="term" value="P:ubiquinone biosynthetic process"/>
    <property type="evidence" value="ECO:0007669"/>
    <property type="project" value="UniProtKB-UniPathway"/>
</dbReference>
<dbReference type="CDD" id="cd13972">
    <property type="entry name" value="UbiB"/>
    <property type="match status" value="1"/>
</dbReference>
<dbReference type="HAMAP" id="MF_00414">
    <property type="entry name" value="UbiB"/>
    <property type="match status" value="1"/>
</dbReference>
<dbReference type="InterPro" id="IPR004147">
    <property type="entry name" value="ABC1_dom"/>
</dbReference>
<dbReference type="InterPro" id="IPR011009">
    <property type="entry name" value="Kinase-like_dom_sf"/>
</dbReference>
<dbReference type="InterPro" id="IPR010232">
    <property type="entry name" value="UbiB"/>
</dbReference>
<dbReference type="InterPro" id="IPR045308">
    <property type="entry name" value="UbiB_bact"/>
</dbReference>
<dbReference type="InterPro" id="IPR050154">
    <property type="entry name" value="UbiB_kinase"/>
</dbReference>
<dbReference type="NCBIfam" id="NF003404">
    <property type="entry name" value="PRK04750.1"/>
    <property type="match status" value="1"/>
</dbReference>
<dbReference type="NCBIfam" id="TIGR01982">
    <property type="entry name" value="UbiB"/>
    <property type="match status" value="1"/>
</dbReference>
<dbReference type="PANTHER" id="PTHR10566">
    <property type="entry name" value="CHAPERONE-ACTIVITY OF BC1 COMPLEX CABC1 -RELATED"/>
    <property type="match status" value="1"/>
</dbReference>
<dbReference type="PANTHER" id="PTHR10566:SF113">
    <property type="entry name" value="PROTEIN ACTIVITY OF BC1 COMPLEX KINASE 7, CHLOROPLASTIC"/>
    <property type="match status" value="1"/>
</dbReference>
<dbReference type="Pfam" id="PF03109">
    <property type="entry name" value="ABC1"/>
    <property type="match status" value="1"/>
</dbReference>
<dbReference type="SUPFAM" id="SSF56112">
    <property type="entry name" value="Protein kinase-like (PK-like)"/>
    <property type="match status" value="1"/>
</dbReference>
<name>UBIB_SHEDO</name>
<keyword id="KW-0067">ATP-binding</keyword>
<keyword id="KW-0997">Cell inner membrane</keyword>
<keyword id="KW-1003">Cell membrane</keyword>
<keyword id="KW-0418">Kinase</keyword>
<keyword id="KW-0472">Membrane</keyword>
<keyword id="KW-0547">Nucleotide-binding</keyword>
<keyword id="KW-1185">Reference proteome</keyword>
<keyword id="KW-0808">Transferase</keyword>
<keyword id="KW-0812">Transmembrane</keyword>
<keyword id="KW-1133">Transmembrane helix</keyword>
<keyword id="KW-0831">Ubiquinone biosynthesis</keyword>